<accession>Q3AZG7</accession>
<keyword id="KW-0963">Cytoplasm</keyword>
<keyword id="KW-0238">DNA-binding</keyword>
<keyword id="KW-1185">Reference proteome</keyword>
<keyword id="KW-0804">Transcription</keyword>
<keyword id="KW-0805">Transcription regulation</keyword>
<feature type="chain" id="PRO_0000257148" description="Probable transcriptional regulatory protein Syncc9902_0542">
    <location>
        <begin position="1"/>
        <end position="248"/>
    </location>
</feature>
<comment type="subcellular location">
    <subcellularLocation>
        <location evidence="1">Cytoplasm</location>
    </subcellularLocation>
</comment>
<comment type="similarity">
    <text evidence="1">Belongs to the TACO1 family.</text>
</comment>
<dbReference type="EMBL" id="CP000097">
    <property type="protein sequence ID" value="ABB25510.1"/>
    <property type="molecule type" value="Genomic_DNA"/>
</dbReference>
<dbReference type="RefSeq" id="WP_011359357.1">
    <property type="nucleotide sequence ID" value="NC_007513.1"/>
</dbReference>
<dbReference type="SMR" id="Q3AZG7"/>
<dbReference type="STRING" id="316279.Syncc9902_0542"/>
<dbReference type="KEGG" id="sye:Syncc9902_0542"/>
<dbReference type="eggNOG" id="COG0217">
    <property type="taxonomic scope" value="Bacteria"/>
</dbReference>
<dbReference type="HOGENOM" id="CLU_062974_2_2_3"/>
<dbReference type="OrthoDB" id="9781053at2"/>
<dbReference type="Proteomes" id="UP000002712">
    <property type="component" value="Chromosome"/>
</dbReference>
<dbReference type="GO" id="GO:0005829">
    <property type="term" value="C:cytosol"/>
    <property type="evidence" value="ECO:0007669"/>
    <property type="project" value="TreeGrafter"/>
</dbReference>
<dbReference type="GO" id="GO:0003677">
    <property type="term" value="F:DNA binding"/>
    <property type="evidence" value="ECO:0007669"/>
    <property type="project" value="UniProtKB-UniRule"/>
</dbReference>
<dbReference type="GO" id="GO:0006355">
    <property type="term" value="P:regulation of DNA-templated transcription"/>
    <property type="evidence" value="ECO:0007669"/>
    <property type="project" value="UniProtKB-UniRule"/>
</dbReference>
<dbReference type="FunFam" id="1.10.10.200:FF:000002">
    <property type="entry name" value="Probable transcriptional regulatory protein CLM62_37755"/>
    <property type="match status" value="1"/>
</dbReference>
<dbReference type="Gene3D" id="1.10.10.200">
    <property type="match status" value="1"/>
</dbReference>
<dbReference type="Gene3D" id="3.30.70.980">
    <property type="match status" value="2"/>
</dbReference>
<dbReference type="HAMAP" id="MF_00693">
    <property type="entry name" value="Transcrip_reg_TACO1"/>
    <property type="match status" value="1"/>
</dbReference>
<dbReference type="InterPro" id="IPR017856">
    <property type="entry name" value="Integrase-like_N"/>
</dbReference>
<dbReference type="InterPro" id="IPR048300">
    <property type="entry name" value="TACO1_YebC-like_2nd/3rd_dom"/>
</dbReference>
<dbReference type="InterPro" id="IPR049083">
    <property type="entry name" value="TACO1_YebC_N"/>
</dbReference>
<dbReference type="InterPro" id="IPR002876">
    <property type="entry name" value="Transcrip_reg_TACO1-like"/>
</dbReference>
<dbReference type="InterPro" id="IPR026564">
    <property type="entry name" value="Transcrip_reg_TACO1-like_dom3"/>
</dbReference>
<dbReference type="InterPro" id="IPR029072">
    <property type="entry name" value="YebC-like"/>
</dbReference>
<dbReference type="NCBIfam" id="NF001030">
    <property type="entry name" value="PRK00110.1"/>
    <property type="match status" value="1"/>
</dbReference>
<dbReference type="NCBIfam" id="NF009044">
    <property type="entry name" value="PRK12378.1"/>
    <property type="match status" value="1"/>
</dbReference>
<dbReference type="NCBIfam" id="TIGR01033">
    <property type="entry name" value="YebC/PmpR family DNA-binding transcriptional regulator"/>
    <property type="match status" value="1"/>
</dbReference>
<dbReference type="PANTHER" id="PTHR12532:SF6">
    <property type="entry name" value="TRANSCRIPTIONAL REGULATORY PROTEIN YEBC-RELATED"/>
    <property type="match status" value="1"/>
</dbReference>
<dbReference type="PANTHER" id="PTHR12532">
    <property type="entry name" value="TRANSLATIONAL ACTIVATOR OF CYTOCHROME C OXIDASE 1"/>
    <property type="match status" value="1"/>
</dbReference>
<dbReference type="Pfam" id="PF20772">
    <property type="entry name" value="TACO1_YebC_N"/>
    <property type="match status" value="1"/>
</dbReference>
<dbReference type="Pfam" id="PF01709">
    <property type="entry name" value="Transcrip_reg"/>
    <property type="match status" value="1"/>
</dbReference>
<dbReference type="SUPFAM" id="SSF75625">
    <property type="entry name" value="YebC-like"/>
    <property type="match status" value="1"/>
</dbReference>
<evidence type="ECO:0000255" key="1">
    <source>
        <dbReference type="HAMAP-Rule" id="MF_00693"/>
    </source>
</evidence>
<proteinExistence type="inferred from homology"/>
<sequence>MAGHSKWSQIKRTKAVVDSKRGALFTRLGREIMVAARAGSDPAGNFQLRTAINKARAAAMPASNIDRAIAKGSGQGGEGAQLEDVRYEGYGPGGMAVMVEALTDNRNRTAADLRLAFSKNGGNLGENGCVAYLFEHRSEVSIKTEAGSEERLLESLLDLDADGYELNDETTATIFGPFAGLEALQDGLRQQGWDVKEWGHQWATTTNVSISDPATAQSCLNLLDALESLDDVRSVSANLELDTKLEIN</sequence>
<organism>
    <name type="scientific">Synechococcus sp. (strain CC9902)</name>
    <dbReference type="NCBI Taxonomy" id="316279"/>
    <lineage>
        <taxon>Bacteria</taxon>
        <taxon>Bacillati</taxon>
        <taxon>Cyanobacteriota</taxon>
        <taxon>Cyanophyceae</taxon>
        <taxon>Synechococcales</taxon>
        <taxon>Synechococcaceae</taxon>
        <taxon>Synechococcus</taxon>
    </lineage>
</organism>
<protein>
    <recommendedName>
        <fullName evidence="1">Probable transcriptional regulatory protein Syncc9902_0542</fullName>
    </recommendedName>
</protein>
<reference key="1">
    <citation type="submission" date="2005-08" db="EMBL/GenBank/DDBJ databases">
        <title>Complete sequence of Synechococcus sp. CC9902.</title>
        <authorList>
            <person name="Copeland A."/>
            <person name="Lucas S."/>
            <person name="Lapidus A."/>
            <person name="Barry K."/>
            <person name="Detter J.C."/>
            <person name="Glavina T."/>
            <person name="Hammon N."/>
            <person name="Israni S."/>
            <person name="Pitluck S."/>
            <person name="Martinez M."/>
            <person name="Schmutz J."/>
            <person name="Larimer F."/>
            <person name="Land M."/>
            <person name="Kyrpides N."/>
            <person name="Ivanova N."/>
            <person name="Richardson P."/>
        </authorList>
    </citation>
    <scope>NUCLEOTIDE SEQUENCE [LARGE SCALE GENOMIC DNA]</scope>
    <source>
        <strain>CC9902</strain>
    </source>
</reference>
<name>Y542_SYNS9</name>
<gene>
    <name type="ordered locus">Syncc9902_0542</name>
</gene>